<evidence type="ECO:0000255" key="1">
    <source>
        <dbReference type="PROSITE-ProRule" id="PRU00126"/>
    </source>
</evidence>
<evidence type="ECO:0000256" key="2">
    <source>
        <dbReference type="SAM" id="MobiDB-lite"/>
    </source>
</evidence>
<evidence type="ECO:0000269" key="3">
    <source>
    </source>
</evidence>
<gene>
    <name type="ORF">SPBC1711.05</name>
</gene>
<comment type="subcellular location">
    <subcellularLocation>
        <location evidence="3">Nucleus</location>
        <location evidence="3">Nucleolus</location>
    </subcellularLocation>
</comment>
<proteinExistence type="predicted"/>
<sequence length="451" mass="47428">MGEISMKSKVCPLIYHFLQENGYVKTAQTFLKETGDKDLAKGKVKKNLLDLLSQKEFLPYLTTEDVGKHKKTKESLEKSNDDSQKISKKGAPPEKAHSSSEASGSGSSSDESDSSSSESESSSEDNDSSSSSSDSESESSSEDSDSSSSSSDSESESSSEGSDSSSSSSSSESESSSEDNDSSSSSSDSESESSSEDSDSSSSSSDSESESSSEGSDSSSSSSSSESESSSEDNDSSSSSSDSESESSSEDSDSSSSSSDSESESSSKDSDSSSNSSDSEDDSSSDSSDSESESSSEDSDSTSSSSDSDSSSSSEDGNSNTDTTTSGEVSAQSSTNSTSSEESTSVKDEDSSKIHDKSLKRKHEDDESSTSTKSSRTTKTPFTRVGDPSQWDFASPALRDNSFNFEDDYGTLANRDLIVTRGKGFRQEKNKKKRGSYRGGRINTEVRSFKF</sequence>
<protein>
    <recommendedName>
        <fullName>LisH domain-containing protein C1711.05</fullName>
    </recommendedName>
</protein>
<dbReference type="EMBL" id="CU329671">
    <property type="protein sequence ID" value="CAB88235.1"/>
    <property type="molecule type" value="Genomic_DNA"/>
</dbReference>
<dbReference type="SMR" id="Q9P785"/>
<dbReference type="BioGRID" id="276242">
    <property type="interactions" value="15"/>
</dbReference>
<dbReference type="FunCoup" id="Q9P785">
    <property type="interactions" value="92"/>
</dbReference>
<dbReference type="STRING" id="284812.Q9P785"/>
<dbReference type="iPTMnet" id="Q9P785"/>
<dbReference type="PaxDb" id="4896-SPBC1711.05.1"/>
<dbReference type="EnsemblFungi" id="SPBC1711.05.1">
    <property type="protein sequence ID" value="SPBC1711.05.1:pep"/>
    <property type="gene ID" value="SPBC1711.05"/>
</dbReference>
<dbReference type="KEGG" id="spo:2539687"/>
<dbReference type="PomBase" id="SPBC1711.05"/>
<dbReference type="VEuPathDB" id="FungiDB:SPBC1711.05"/>
<dbReference type="eggNOG" id="KOG2992">
    <property type="taxonomic scope" value="Eukaryota"/>
</dbReference>
<dbReference type="HOGENOM" id="CLU_037040_1_0_1"/>
<dbReference type="InParanoid" id="Q9P785"/>
<dbReference type="OMA" id="ENNSGME"/>
<dbReference type="PRO" id="PR:Q9P785"/>
<dbReference type="Proteomes" id="UP000002485">
    <property type="component" value="Chromosome II"/>
</dbReference>
<dbReference type="GO" id="GO:0005730">
    <property type="term" value="C:nucleolus"/>
    <property type="evidence" value="ECO:0007005"/>
    <property type="project" value="PomBase"/>
</dbReference>
<dbReference type="GO" id="GO:0005654">
    <property type="term" value="C:nucleoplasm"/>
    <property type="evidence" value="ECO:0000318"/>
    <property type="project" value="GO_Central"/>
</dbReference>
<dbReference type="GO" id="GO:0006913">
    <property type="term" value="P:nucleocytoplasmic transport"/>
    <property type="evidence" value="ECO:0000255"/>
    <property type="project" value="PomBase"/>
</dbReference>
<dbReference type="InterPro" id="IPR006594">
    <property type="entry name" value="LisH"/>
</dbReference>
<dbReference type="InterPro" id="IPR007718">
    <property type="entry name" value="Srp40_C"/>
</dbReference>
<dbReference type="Pfam" id="PF08513">
    <property type="entry name" value="LisH"/>
    <property type="match status" value="1"/>
</dbReference>
<dbReference type="Pfam" id="PF05022">
    <property type="entry name" value="SRP40_C"/>
    <property type="match status" value="1"/>
</dbReference>
<dbReference type="SMART" id="SM00667">
    <property type="entry name" value="LisH"/>
    <property type="match status" value="1"/>
</dbReference>
<dbReference type="PROSITE" id="PS50896">
    <property type="entry name" value="LISH"/>
    <property type="match status" value="1"/>
</dbReference>
<organism>
    <name type="scientific">Schizosaccharomyces pombe (strain 972 / ATCC 24843)</name>
    <name type="common">Fission yeast</name>
    <dbReference type="NCBI Taxonomy" id="284812"/>
    <lineage>
        <taxon>Eukaryota</taxon>
        <taxon>Fungi</taxon>
        <taxon>Dikarya</taxon>
        <taxon>Ascomycota</taxon>
        <taxon>Taphrinomycotina</taxon>
        <taxon>Schizosaccharomycetes</taxon>
        <taxon>Schizosaccharomycetales</taxon>
        <taxon>Schizosaccharomycetaceae</taxon>
        <taxon>Schizosaccharomyces</taxon>
    </lineage>
</organism>
<accession>Q9P785</accession>
<name>YNY5_SCHPO</name>
<feature type="chain" id="PRO_0000303958" description="LisH domain-containing protein C1711.05">
    <location>
        <begin position="1"/>
        <end position="451"/>
    </location>
</feature>
<feature type="domain" description="LisH" evidence="1">
    <location>
        <begin position="6"/>
        <end position="38"/>
    </location>
</feature>
<feature type="region of interest" description="Disordered" evidence="2">
    <location>
        <begin position="59"/>
        <end position="394"/>
    </location>
</feature>
<feature type="compositionally biased region" description="Basic and acidic residues" evidence="2">
    <location>
        <begin position="73"/>
        <end position="98"/>
    </location>
</feature>
<feature type="compositionally biased region" description="Low complexity" evidence="2">
    <location>
        <begin position="99"/>
        <end position="120"/>
    </location>
</feature>
<feature type="compositionally biased region" description="Acidic residues" evidence="2">
    <location>
        <begin position="135"/>
        <end position="145"/>
    </location>
</feature>
<feature type="compositionally biased region" description="Low complexity" evidence="2">
    <location>
        <begin position="146"/>
        <end position="174"/>
    </location>
</feature>
<feature type="compositionally biased region" description="Acidic residues" evidence="2">
    <location>
        <begin position="189"/>
        <end position="199"/>
    </location>
</feature>
<feature type="compositionally biased region" description="Low complexity" evidence="2">
    <location>
        <begin position="200"/>
        <end position="228"/>
    </location>
</feature>
<feature type="compositionally biased region" description="Acidic residues" evidence="2">
    <location>
        <begin position="243"/>
        <end position="253"/>
    </location>
</feature>
<feature type="compositionally biased region" description="Acidic residues" evidence="2">
    <location>
        <begin position="278"/>
        <end position="300"/>
    </location>
</feature>
<feature type="compositionally biased region" description="Low complexity" evidence="2">
    <location>
        <begin position="301"/>
        <end position="319"/>
    </location>
</feature>
<feature type="compositionally biased region" description="Polar residues" evidence="2">
    <location>
        <begin position="320"/>
        <end position="332"/>
    </location>
</feature>
<feature type="compositionally biased region" description="Low complexity" evidence="2">
    <location>
        <begin position="333"/>
        <end position="343"/>
    </location>
</feature>
<feature type="compositionally biased region" description="Basic and acidic residues" evidence="2">
    <location>
        <begin position="344"/>
        <end position="365"/>
    </location>
</feature>
<feature type="compositionally biased region" description="Low complexity" evidence="2">
    <location>
        <begin position="369"/>
        <end position="380"/>
    </location>
</feature>
<reference key="1">
    <citation type="journal article" date="2002" name="Nature">
        <title>The genome sequence of Schizosaccharomyces pombe.</title>
        <authorList>
            <person name="Wood V."/>
            <person name="Gwilliam R."/>
            <person name="Rajandream M.A."/>
            <person name="Lyne M.H."/>
            <person name="Lyne R."/>
            <person name="Stewart A."/>
            <person name="Sgouros J.G."/>
            <person name="Peat N."/>
            <person name="Hayles J."/>
            <person name="Baker S.G."/>
            <person name="Basham D."/>
            <person name="Bowman S."/>
            <person name="Brooks K."/>
            <person name="Brown D."/>
            <person name="Brown S."/>
            <person name="Chillingworth T."/>
            <person name="Churcher C.M."/>
            <person name="Collins M."/>
            <person name="Connor R."/>
            <person name="Cronin A."/>
            <person name="Davis P."/>
            <person name="Feltwell T."/>
            <person name="Fraser A."/>
            <person name="Gentles S."/>
            <person name="Goble A."/>
            <person name="Hamlin N."/>
            <person name="Harris D.E."/>
            <person name="Hidalgo J."/>
            <person name="Hodgson G."/>
            <person name="Holroyd S."/>
            <person name="Hornsby T."/>
            <person name="Howarth S."/>
            <person name="Huckle E.J."/>
            <person name="Hunt S."/>
            <person name="Jagels K."/>
            <person name="James K.D."/>
            <person name="Jones L."/>
            <person name="Jones M."/>
            <person name="Leather S."/>
            <person name="McDonald S."/>
            <person name="McLean J."/>
            <person name="Mooney P."/>
            <person name="Moule S."/>
            <person name="Mungall K.L."/>
            <person name="Murphy L.D."/>
            <person name="Niblett D."/>
            <person name="Odell C."/>
            <person name="Oliver K."/>
            <person name="O'Neil S."/>
            <person name="Pearson D."/>
            <person name="Quail M.A."/>
            <person name="Rabbinowitsch E."/>
            <person name="Rutherford K.M."/>
            <person name="Rutter S."/>
            <person name="Saunders D."/>
            <person name="Seeger K."/>
            <person name="Sharp S."/>
            <person name="Skelton J."/>
            <person name="Simmonds M.N."/>
            <person name="Squares R."/>
            <person name="Squares S."/>
            <person name="Stevens K."/>
            <person name="Taylor K."/>
            <person name="Taylor R.G."/>
            <person name="Tivey A."/>
            <person name="Walsh S.V."/>
            <person name="Warren T."/>
            <person name="Whitehead S."/>
            <person name="Woodward J.R."/>
            <person name="Volckaert G."/>
            <person name="Aert R."/>
            <person name="Robben J."/>
            <person name="Grymonprez B."/>
            <person name="Weltjens I."/>
            <person name="Vanstreels E."/>
            <person name="Rieger M."/>
            <person name="Schaefer M."/>
            <person name="Mueller-Auer S."/>
            <person name="Gabel C."/>
            <person name="Fuchs M."/>
            <person name="Duesterhoeft A."/>
            <person name="Fritzc C."/>
            <person name="Holzer E."/>
            <person name="Moestl D."/>
            <person name="Hilbert H."/>
            <person name="Borzym K."/>
            <person name="Langer I."/>
            <person name="Beck A."/>
            <person name="Lehrach H."/>
            <person name="Reinhardt R."/>
            <person name="Pohl T.M."/>
            <person name="Eger P."/>
            <person name="Zimmermann W."/>
            <person name="Wedler H."/>
            <person name="Wambutt R."/>
            <person name="Purnelle B."/>
            <person name="Goffeau A."/>
            <person name="Cadieu E."/>
            <person name="Dreano S."/>
            <person name="Gloux S."/>
            <person name="Lelaure V."/>
            <person name="Mottier S."/>
            <person name="Galibert F."/>
            <person name="Aves S.J."/>
            <person name="Xiang Z."/>
            <person name="Hunt C."/>
            <person name="Moore K."/>
            <person name="Hurst S.M."/>
            <person name="Lucas M."/>
            <person name="Rochet M."/>
            <person name="Gaillardin C."/>
            <person name="Tallada V.A."/>
            <person name="Garzon A."/>
            <person name="Thode G."/>
            <person name="Daga R.R."/>
            <person name="Cruzado L."/>
            <person name="Jimenez J."/>
            <person name="Sanchez M."/>
            <person name="del Rey F."/>
            <person name="Benito J."/>
            <person name="Dominguez A."/>
            <person name="Revuelta J.L."/>
            <person name="Moreno S."/>
            <person name="Armstrong J."/>
            <person name="Forsburg S.L."/>
            <person name="Cerutti L."/>
            <person name="Lowe T."/>
            <person name="McCombie W.R."/>
            <person name="Paulsen I."/>
            <person name="Potashkin J."/>
            <person name="Shpakovski G.V."/>
            <person name="Ussery D."/>
            <person name="Barrell B.G."/>
            <person name="Nurse P."/>
        </authorList>
    </citation>
    <scope>NUCLEOTIDE SEQUENCE [LARGE SCALE GENOMIC DNA]</scope>
    <source>
        <strain>972 / ATCC 24843</strain>
    </source>
</reference>
<reference key="2">
    <citation type="journal article" date="2006" name="Nat. Biotechnol.">
        <title>ORFeome cloning and global analysis of protein localization in the fission yeast Schizosaccharomyces pombe.</title>
        <authorList>
            <person name="Matsuyama A."/>
            <person name="Arai R."/>
            <person name="Yashiroda Y."/>
            <person name="Shirai A."/>
            <person name="Kamata A."/>
            <person name="Sekido S."/>
            <person name="Kobayashi Y."/>
            <person name="Hashimoto A."/>
            <person name="Hamamoto M."/>
            <person name="Hiraoka Y."/>
            <person name="Horinouchi S."/>
            <person name="Yoshida M."/>
        </authorList>
    </citation>
    <scope>SUBCELLULAR LOCATION [LARGE SCALE ANALYSIS]</scope>
</reference>
<keyword id="KW-0539">Nucleus</keyword>
<keyword id="KW-1185">Reference proteome</keyword>